<protein>
    <recommendedName>
        <fullName>Myosin-11</fullName>
    </recommendedName>
    <alternativeName>
        <fullName>Myosin heavy chain 11</fullName>
    </alternativeName>
    <alternativeName>
        <fullName>Myosin heavy chain, smooth muscle isoform</fullName>
    </alternativeName>
    <alternativeName>
        <fullName>SMMHC</fullName>
    </alternativeName>
</protein>
<organism>
    <name type="scientific">Sus scrofa</name>
    <name type="common">Pig</name>
    <dbReference type="NCBI Taxonomy" id="9823"/>
    <lineage>
        <taxon>Eukaryota</taxon>
        <taxon>Metazoa</taxon>
        <taxon>Chordata</taxon>
        <taxon>Craniata</taxon>
        <taxon>Vertebrata</taxon>
        <taxon>Euteleostomi</taxon>
        <taxon>Mammalia</taxon>
        <taxon>Eutheria</taxon>
        <taxon>Laurasiatheria</taxon>
        <taxon>Artiodactyla</taxon>
        <taxon>Suina</taxon>
        <taxon>Suidae</taxon>
        <taxon>Sus</taxon>
    </lineage>
</organism>
<gene>
    <name type="primary">MYH11</name>
</gene>
<proteinExistence type="evidence at protein level"/>
<keyword id="KW-0009">Actin-binding</keyword>
<keyword id="KW-0067">ATP-binding</keyword>
<keyword id="KW-0175">Coiled coil</keyword>
<keyword id="KW-0963">Cytoplasm</keyword>
<keyword id="KW-0903">Direct protein sequencing</keyword>
<keyword id="KW-0505">Motor protein</keyword>
<keyword id="KW-0514">Muscle protein</keyword>
<keyword id="KW-0518">Myosin</keyword>
<keyword id="KW-0547">Nucleotide-binding</keyword>
<keyword id="KW-1185">Reference proteome</keyword>
<keyword id="KW-0787">Thick filament</keyword>
<comment type="function">
    <text>Muscle contraction.</text>
</comment>
<comment type="subunit">
    <text>Muscle myosin is a hexameric protein that consists of 2 heavy chain subunits (MHC), 2 alkali light chain subunits (MLC) and 2 regulatory light chain subunits (MLC-2).</text>
</comment>
<comment type="subcellular location">
    <subcellularLocation>
        <location evidence="1">Melanosome</location>
    </subcellularLocation>
    <subcellularLocation>
        <location>Cytoplasm</location>
        <location>Myofibril</location>
    </subcellularLocation>
    <text>Thick filaments of the myofibrils.</text>
</comment>
<comment type="domain">
    <text>The rodlike tail sequence is highly repetitive, showing cycles of a 28-residue repeat pattern composed of 4 heptapeptides, characteristic for alpha-helical coiled coils.</text>
</comment>
<comment type="domain">
    <text evidence="3">Limited proteolysis of myosin heavy chain produces 1 light meromyosin (LMM) and 1 heavy meromyosin (HMM). HMM can be further cleaved into 2 globular subfragments (S1) and 1 rod-shaped subfragment (S2).</text>
</comment>
<comment type="similarity">
    <text evidence="3">Belongs to the TRAFAC class myosin-kinesin ATPase superfamily. Myosin family.</text>
</comment>
<reference key="1">
    <citation type="journal article" date="1993" name="J. Biol. Chem.">
        <title>Actin-binding peptides obtained from the C-terminal 24-kDa fragment of porcine aorta smooth muscle myosin subfragment-1 heavy chain.</title>
        <authorList>
            <person name="Katoh T."/>
            <person name="Morita F."/>
        </authorList>
    </citation>
    <scope>PROTEIN SEQUENCE</scope>
    <source>
        <tissue>Aortic smooth muscle</tissue>
    </source>
</reference>
<feature type="chain" id="PRO_0000123426" description="Myosin-11">
    <location>
        <begin position="1" status="less than"/>
        <end position="65" status="greater than"/>
    </location>
</feature>
<feature type="domain" description="Myosin motor" evidence="2">
    <location>
        <begin position="1" status="less than"/>
        <end position="65" status="greater than"/>
    </location>
</feature>
<feature type="non-consecutive residues" evidence="3">
    <location>
        <begin position="53"/>
        <end position="54"/>
    </location>
</feature>
<feature type="non-terminal residue">
    <location>
        <position position="1"/>
    </location>
</feature>
<feature type="non-terminal residue">
    <location>
        <position position="65"/>
    </location>
</feature>
<dbReference type="PIR" id="A45200">
    <property type="entry name" value="A45200"/>
</dbReference>
<dbReference type="SMR" id="P81271"/>
<dbReference type="STRING" id="9823.ENSSSCP00000051394"/>
<dbReference type="PaxDb" id="9823-ENSSSCP00000000151"/>
<dbReference type="PeptideAtlas" id="P81271"/>
<dbReference type="eggNOG" id="KOG0161">
    <property type="taxonomic scope" value="Eukaryota"/>
</dbReference>
<dbReference type="InParanoid" id="P81271"/>
<dbReference type="Proteomes" id="UP000008227">
    <property type="component" value="Unplaced"/>
</dbReference>
<dbReference type="Proteomes" id="UP000314985">
    <property type="component" value="Unplaced"/>
</dbReference>
<dbReference type="Proteomes" id="UP000694570">
    <property type="component" value="Unplaced"/>
</dbReference>
<dbReference type="Proteomes" id="UP000694571">
    <property type="component" value="Unplaced"/>
</dbReference>
<dbReference type="Proteomes" id="UP000694720">
    <property type="component" value="Unplaced"/>
</dbReference>
<dbReference type="Proteomes" id="UP000694722">
    <property type="component" value="Unplaced"/>
</dbReference>
<dbReference type="Proteomes" id="UP000694723">
    <property type="component" value="Unplaced"/>
</dbReference>
<dbReference type="Proteomes" id="UP000694724">
    <property type="component" value="Unplaced"/>
</dbReference>
<dbReference type="Proteomes" id="UP000694725">
    <property type="component" value="Unplaced"/>
</dbReference>
<dbReference type="Proteomes" id="UP000694726">
    <property type="component" value="Unplaced"/>
</dbReference>
<dbReference type="Proteomes" id="UP000694727">
    <property type="component" value="Unplaced"/>
</dbReference>
<dbReference type="Proteomes" id="UP000694728">
    <property type="component" value="Unplaced"/>
</dbReference>
<dbReference type="GO" id="GO:0042470">
    <property type="term" value="C:melanosome"/>
    <property type="evidence" value="ECO:0007669"/>
    <property type="project" value="UniProtKB-SubCell"/>
</dbReference>
<dbReference type="GO" id="GO:0030016">
    <property type="term" value="C:myofibril"/>
    <property type="evidence" value="ECO:0007669"/>
    <property type="project" value="UniProtKB-SubCell"/>
</dbReference>
<dbReference type="GO" id="GO:0016459">
    <property type="term" value="C:myosin complex"/>
    <property type="evidence" value="ECO:0007669"/>
    <property type="project" value="UniProtKB-KW"/>
</dbReference>
<dbReference type="GO" id="GO:0032982">
    <property type="term" value="C:myosin filament"/>
    <property type="evidence" value="ECO:0007669"/>
    <property type="project" value="UniProtKB-KW"/>
</dbReference>
<dbReference type="GO" id="GO:0003779">
    <property type="term" value="F:actin binding"/>
    <property type="evidence" value="ECO:0007669"/>
    <property type="project" value="UniProtKB-KW"/>
</dbReference>
<dbReference type="GO" id="GO:0005524">
    <property type="term" value="F:ATP binding"/>
    <property type="evidence" value="ECO:0007669"/>
    <property type="project" value="UniProtKB-KW"/>
</dbReference>
<dbReference type="GO" id="GO:0003774">
    <property type="term" value="F:cytoskeletal motor activity"/>
    <property type="evidence" value="ECO:0007669"/>
    <property type="project" value="InterPro"/>
</dbReference>
<dbReference type="Gene3D" id="1.20.58.60">
    <property type="match status" value="1"/>
</dbReference>
<dbReference type="Gene3D" id="3.40.850.10">
    <property type="entry name" value="Kinesin motor domain"/>
    <property type="match status" value="1"/>
</dbReference>
<dbReference type="InterPro" id="IPR036961">
    <property type="entry name" value="Kinesin_motor_dom_sf"/>
</dbReference>
<dbReference type="InterPro" id="IPR001609">
    <property type="entry name" value="Myosin_head_motor_dom-like"/>
</dbReference>
<dbReference type="InterPro" id="IPR027417">
    <property type="entry name" value="P-loop_NTPase"/>
</dbReference>
<dbReference type="PANTHER" id="PTHR13140">
    <property type="entry name" value="MYOSIN"/>
    <property type="match status" value="1"/>
</dbReference>
<dbReference type="PANTHER" id="PTHR13140:SF857">
    <property type="entry name" value="MYOSIN-11"/>
    <property type="match status" value="1"/>
</dbReference>
<dbReference type="Pfam" id="PF00063">
    <property type="entry name" value="Myosin_head"/>
    <property type="match status" value="1"/>
</dbReference>
<dbReference type="SUPFAM" id="SSF52540">
    <property type="entry name" value="P-loop containing nucleoside triphosphate hydrolases"/>
    <property type="match status" value="1"/>
</dbReference>
<dbReference type="PROSITE" id="PS51456">
    <property type="entry name" value="MYOSIN_MOTOR"/>
    <property type="match status" value="1"/>
</dbReference>
<accession>P81271</accession>
<name>MYH11_PIG</name>
<evidence type="ECO:0000250" key="1"/>
<evidence type="ECO:0000255" key="2">
    <source>
        <dbReference type="PROSITE-ProRule" id="PRU00782"/>
    </source>
</evidence>
<evidence type="ECO:0000305" key="3"/>
<sequence length="65" mass="7864">RSGKLDAFLVLEQLRCNGVLEGIRICRQGFPNRIVFQEFRQRYEILAANAIPKLRNWQWWRLFTK</sequence>